<accession>B7NJG8</accession>
<gene>
    <name evidence="1" type="primary">minE</name>
    <name type="ordered locus">ECIAI39_1899</name>
</gene>
<sequence>MALLDFFLSRKKNTANIAKERLQIIVAERRRSDAEPHYLPQLRKDILEVICKYVQIDPEMVTVQLEQKDGDISILELNVTLPEAEELK</sequence>
<organism>
    <name type="scientific">Escherichia coli O7:K1 (strain IAI39 / ExPEC)</name>
    <dbReference type="NCBI Taxonomy" id="585057"/>
    <lineage>
        <taxon>Bacteria</taxon>
        <taxon>Pseudomonadati</taxon>
        <taxon>Pseudomonadota</taxon>
        <taxon>Gammaproteobacteria</taxon>
        <taxon>Enterobacterales</taxon>
        <taxon>Enterobacteriaceae</taxon>
        <taxon>Escherichia</taxon>
    </lineage>
</organism>
<protein>
    <recommendedName>
        <fullName evidence="1">Cell division topological specificity factor</fullName>
    </recommendedName>
</protein>
<comment type="function">
    <text evidence="1">Prevents the cell division inhibition by proteins MinC and MinD at internal division sites while permitting inhibition at polar sites. This ensures cell division at the proper site by restricting the formation of a division septum at the midpoint of the long axis of the cell.</text>
</comment>
<comment type="similarity">
    <text evidence="1">Belongs to the MinE family.</text>
</comment>
<reference key="1">
    <citation type="journal article" date="2009" name="PLoS Genet.">
        <title>Organised genome dynamics in the Escherichia coli species results in highly diverse adaptive paths.</title>
        <authorList>
            <person name="Touchon M."/>
            <person name="Hoede C."/>
            <person name="Tenaillon O."/>
            <person name="Barbe V."/>
            <person name="Baeriswyl S."/>
            <person name="Bidet P."/>
            <person name="Bingen E."/>
            <person name="Bonacorsi S."/>
            <person name="Bouchier C."/>
            <person name="Bouvet O."/>
            <person name="Calteau A."/>
            <person name="Chiapello H."/>
            <person name="Clermont O."/>
            <person name="Cruveiller S."/>
            <person name="Danchin A."/>
            <person name="Diard M."/>
            <person name="Dossat C."/>
            <person name="Karoui M.E."/>
            <person name="Frapy E."/>
            <person name="Garry L."/>
            <person name="Ghigo J.M."/>
            <person name="Gilles A.M."/>
            <person name="Johnson J."/>
            <person name="Le Bouguenec C."/>
            <person name="Lescat M."/>
            <person name="Mangenot S."/>
            <person name="Martinez-Jehanne V."/>
            <person name="Matic I."/>
            <person name="Nassif X."/>
            <person name="Oztas S."/>
            <person name="Petit M.A."/>
            <person name="Pichon C."/>
            <person name="Rouy Z."/>
            <person name="Ruf C.S."/>
            <person name="Schneider D."/>
            <person name="Tourret J."/>
            <person name="Vacherie B."/>
            <person name="Vallenet D."/>
            <person name="Medigue C."/>
            <person name="Rocha E.P.C."/>
            <person name="Denamur E."/>
        </authorList>
    </citation>
    <scope>NUCLEOTIDE SEQUENCE [LARGE SCALE GENOMIC DNA]</scope>
    <source>
        <strain>IAI39 / ExPEC</strain>
    </source>
</reference>
<dbReference type="EMBL" id="CU928164">
    <property type="protein sequence ID" value="CAR18030.1"/>
    <property type="molecule type" value="Genomic_DNA"/>
</dbReference>
<dbReference type="RefSeq" id="WP_001185665.1">
    <property type="nucleotide sequence ID" value="NC_011750.1"/>
</dbReference>
<dbReference type="RefSeq" id="YP_002407876.1">
    <property type="nucleotide sequence ID" value="NC_011750.1"/>
</dbReference>
<dbReference type="SMR" id="B7NJG8"/>
<dbReference type="STRING" id="585057.ECIAI39_1899"/>
<dbReference type="GeneID" id="93776260"/>
<dbReference type="KEGG" id="ect:ECIAI39_1899"/>
<dbReference type="PATRIC" id="fig|585057.6.peg.1977"/>
<dbReference type="HOGENOM" id="CLU_137929_2_2_6"/>
<dbReference type="Proteomes" id="UP000000749">
    <property type="component" value="Chromosome"/>
</dbReference>
<dbReference type="GO" id="GO:0051301">
    <property type="term" value="P:cell division"/>
    <property type="evidence" value="ECO:0007669"/>
    <property type="project" value="UniProtKB-KW"/>
</dbReference>
<dbReference type="GO" id="GO:0032955">
    <property type="term" value="P:regulation of division septum assembly"/>
    <property type="evidence" value="ECO:0007669"/>
    <property type="project" value="InterPro"/>
</dbReference>
<dbReference type="FunFam" id="3.30.1070.10:FF:000001">
    <property type="entry name" value="Cell division topological specificity factor"/>
    <property type="match status" value="1"/>
</dbReference>
<dbReference type="Gene3D" id="3.30.1070.10">
    <property type="entry name" value="Cell division topological specificity factor MinE"/>
    <property type="match status" value="1"/>
</dbReference>
<dbReference type="HAMAP" id="MF_00262">
    <property type="entry name" value="MinE"/>
    <property type="match status" value="1"/>
</dbReference>
<dbReference type="InterPro" id="IPR005527">
    <property type="entry name" value="MinE"/>
</dbReference>
<dbReference type="InterPro" id="IPR036707">
    <property type="entry name" value="MinE_sf"/>
</dbReference>
<dbReference type="NCBIfam" id="TIGR01215">
    <property type="entry name" value="minE"/>
    <property type="match status" value="1"/>
</dbReference>
<dbReference type="NCBIfam" id="NF001422">
    <property type="entry name" value="PRK00296.1"/>
    <property type="match status" value="1"/>
</dbReference>
<dbReference type="Pfam" id="PF03776">
    <property type="entry name" value="MinE"/>
    <property type="match status" value="1"/>
</dbReference>
<dbReference type="SUPFAM" id="SSF55229">
    <property type="entry name" value="Cell division protein MinE topological specificity domain"/>
    <property type="match status" value="1"/>
</dbReference>
<evidence type="ECO:0000255" key="1">
    <source>
        <dbReference type="HAMAP-Rule" id="MF_00262"/>
    </source>
</evidence>
<keyword id="KW-0131">Cell cycle</keyword>
<keyword id="KW-0132">Cell division</keyword>
<feature type="chain" id="PRO_1000191282" description="Cell division topological specificity factor">
    <location>
        <begin position="1"/>
        <end position="88"/>
    </location>
</feature>
<proteinExistence type="inferred from homology"/>
<name>MINE_ECO7I</name>